<dbReference type="EC" id="4.2.3.4" evidence="1"/>
<dbReference type="EMBL" id="CP000255">
    <property type="protein sequence ID" value="ABD22625.1"/>
    <property type="molecule type" value="Genomic_DNA"/>
</dbReference>
<dbReference type="RefSeq" id="WP_000776323.1">
    <property type="nucleotide sequence ID" value="NZ_CP027476.1"/>
</dbReference>
<dbReference type="SMR" id="Q2FGX5"/>
<dbReference type="KEGG" id="saa:SAUSA300_1356"/>
<dbReference type="HOGENOM" id="CLU_001201_0_1_9"/>
<dbReference type="OMA" id="IAIGMRM"/>
<dbReference type="UniPathway" id="UPA00053">
    <property type="reaction ID" value="UER00085"/>
</dbReference>
<dbReference type="Proteomes" id="UP000001939">
    <property type="component" value="Chromosome"/>
</dbReference>
<dbReference type="GO" id="GO:0005737">
    <property type="term" value="C:cytoplasm"/>
    <property type="evidence" value="ECO:0007669"/>
    <property type="project" value="UniProtKB-SubCell"/>
</dbReference>
<dbReference type="GO" id="GO:0003856">
    <property type="term" value="F:3-dehydroquinate synthase activity"/>
    <property type="evidence" value="ECO:0007669"/>
    <property type="project" value="UniProtKB-UniRule"/>
</dbReference>
<dbReference type="GO" id="GO:0046872">
    <property type="term" value="F:metal ion binding"/>
    <property type="evidence" value="ECO:0007669"/>
    <property type="project" value="UniProtKB-KW"/>
</dbReference>
<dbReference type="GO" id="GO:0000166">
    <property type="term" value="F:nucleotide binding"/>
    <property type="evidence" value="ECO:0007669"/>
    <property type="project" value="UniProtKB-KW"/>
</dbReference>
<dbReference type="GO" id="GO:0008652">
    <property type="term" value="P:amino acid biosynthetic process"/>
    <property type="evidence" value="ECO:0007669"/>
    <property type="project" value="UniProtKB-KW"/>
</dbReference>
<dbReference type="GO" id="GO:0009073">
    <property type="term" value="P:aromatic amino acid family biosynthetic process"/>
    <property type="evidence" value="ECO:0007669"/>
    <property type="project" value="UniProtKB-KW"/>
</dbReference>
<dbReference type="GO" id="GO:0009423">
    <property type="term" value="P:chorismate biosynthetic process"/>
    <property type="evidence" value="ECO:0007669"/>
    <property type="project" value="UniProtKB-UniRule"/>
</dbReference>
<dbReference type="FunFam" id="1.20.1090.10:FF:000016">
    <property type="entry name" value="3-dehydroquinate synthase"/>
    <property type="match status" value="1"/>
</dbReference>
<dbReference type="FunFam" id="3.40.50.1970:FF:000019">
    <property type="entry name" value="3-dehydroquinate synthase"/>
    <property type="match status" value="1"/>
</dbReference>
<dbReference type="Gene3D" id="3.40.50.1970">
    <property type="match status" value="1"/>
</dbReference>
<dbReference type="Gene3D" id="1.20.1090.10">
    <property type="entry name" value="Dehydroquinate synthase-like - alpha domain"/>
    <property type="match status" value="1"/>
</dbReference>
<dbReference type="HAMAP" id="MF_00110">
    <property type="entry name" value="DHQ_synthase"/>
    <property type="match status" value="1"/>
</dbReference>
<dbReference type="InterPro" id="IPR050071">
    <property type="entry name" value="Dehydroquinate_synthase"/>
</dbReference>
<dbReference type="InterPro" id="IPR016037">
    <property type="entry name" value="DHQ_synth_AroB"/>
</dbReference>
<dbReference type="InterPro" id="IPR030963">
    <property type="entry name" value="DHQ_synth_fam"/>
</dbReference>
<dbReference type="InterPro" id="IPR030960">
    <property type="entry name" value="DHQS/DOIS_N"/>
</dbReference>
<dbReference type="InterPro" id="IPR056179">
    <property type="entry name" value="DHQS_C"/>
</dbReference>
<dbReference type="NCBIfam" id="TIGR01357">
    <property type="entry name" value="aroB"/>
    <property type="match status" value="1"/>
</dbReference>
<dbReference type="PANTHER" id="PTHR43622">
    <property type="entry name" value="3-DEHYDROQUINATE SYNTHASE"/>
    <property type="match status" value="1"/>
</dbReference>
<dbReference type="PANTHER" id="PTHR43622:SF7">
    <property type="entry name" value="3-DEHYDROQUINATE SYNTHASE, CHLOROPLASTIC"/>
    <property type="match status" value="1"/>
</dbReference>
<dbReference type="Pfam" id="PF01761">
    <property type="entry name" value="DHQ_synthase"/>
    <property type="match status" value="1"/>
</dbReference>
<dbReference type="Pfam" id="PF24621">
    <property type="entry name" value="DHQS_C"/>
    <property type="match status" value="1"/>
</dbReference>
<dbReference type="PIRSF" id="PIRSF001455">
    <property type="entry name" value="DHQ_synth"/>
    <property type="match status" value="1"/>
</dbReference>
<dbReference type="SUPFAM" id="SSF56796">
    <property type="entry name" value="Dehydroquinate synthase-like"/>
    <property type="match status" value="1"/>
</dbReference>
<gene>
    <name evidence="1" type="primary">aroB</name>
    <name type="ordered locus">SAUSA300_1356</name>
</gene>
<keyword id="KW-0028">Amino-acid biosynthesis</keyword>
<keyword id="KW-0057">Aromatic amino acid biosynthesis</keyword>
<keyword id="KW-0170">Cobalt</keyword>
<keyword id="KW-0963">Cytoplasm</keyword>
<keyword id="KW-0456">Lyase</keyword>
<keyword id="KW-0479">Metal-binding</keyword>
<keyword id="KW-0520">NAD</keyword>
<keyword id="KW-0547">Nucleotide-binding</keyword>
<keyword id="KW-0862">Zinc</keyword>
<name>AROB_STAA3</name>
<protein>
    <recommendedName>
        <fullName evidence="1">3-dehydroquinate synthase</fullName>
        <shortName evidence="1">DHQS</shortName>
        <ecNumber evidence="1">4.2.3.4</ecNumber>
    </recommendedName>
</protein>
<accession>Q2FGX5</accession>
<comment type="function">
    <text evidence="1">Catalyzes the conversion of 3-deoxy-D-arabino-heptulosonate 7-phosphate (DAHP) to dehydroquinate (DHQ).</text>
</comment>
<comment type="catalytic activity">
    <reaction evidence="1">
        <text>7-phospho-2-dehydro-3-deoxy-D-arabino-heptonate = 3-dehydroquinate + phosphate</text>
        <dbReference type="Rhea" id="RHEA:21968"/>
        <dbReference type="ChEBI" id="CHEBI:32364"/>
        <dbReference type="ChEBI" id="CHEBI:43474"/>
        <dbReference type="ChEBI" id="CHEBI:58394"/>
        <dbReference type="EC" id="4.2.3.4"/>
    </reaction>
</comment>
<comment type="cofactor">
    <cofactor evidence="1">
        <name>Co(2+)</name>
        <dbReference type="ChEBI" id="CHEBI:48828"/>
    </cofactor>
    <cofactor evidence="1">
        <name>Zn(2+)</name>
        <dbReference type="ChEBI" id="CHEBI:29105"/>
    </cofactor>
    <text evidence="1">Binds 1 divalent metal cation per subunit. Can use either Co(2+) or Zn(2+).</text>
</comment>
<comment type="cofactor">
    <cofactor evidence="1">
        <name>NAD(+)</name>
        <dbReference type="ChEBI" id="CHEBI:57540"/>
    </cofactor>
</comment>
<comment type="pathway">
    <text evidence="1">Metabolic intermediate biosynthesis; chorismate biosynthesis; chorismate from D-erythrose 4-phosphate and phosphoenolpyruvate: step 2/7.</text>
</comment>
<comment type="subcellular location">
    <subcellularLocation>
        <location evidence="1">Cytoplasm</location>
    </subcellularLocation>
</comment>
<comment type="similarity">
    <text evidence="1">Belongs to the sugar phosphate cyclases superfamily. Dehydroquinate synthase family.</text>
</comment>
<organism>
    <name type="scientific">Staphylococcus aureus (strain USA300)</name>
    <dbReference type="NCBI Taxonomy" id="367830"/>
    <lineage>
        <taxon>Bacteria</taxon>
        <taxon>Bacillati</taxon>
        <taxon>Bacillota</taxon>
        <taxon>Bacilli</taxon>
        <taxon>Bacillales</taxon>
        <taxon>Staphylococcaceae</taxon>
        <taxon>Staphylococcus</taxon>
    </lineage>
</organism>
<proteinExistence type="inferred from homology"/>
<evidence type="ECO:0000255" key="1">
    <source>
        <dbReference type="HAMAP-Rule" id="MF_00110"/>
    </source>
</evidence>
<feature type="chain" id="PRO_1000094628" description="3-dehydroquinate synthase">
    <location>
        <begin position="1"/>
        <end position="354"/>
    </location>
</feature>
<feature type="binding site" evidence="1">
    <location>
        <begin position="100"/>
        <end position="104"/>
    </location>
    <ligand>
        <name>NAD(+)</name>
        <dbReference type="ChEBI" id="CHEBI:57540"/>
    </ligand>
</feature>
<feature type="binding site" evidence="1">
    <location>
        <begin position="124"/>
        <end position="125"/>
    </location>
    <ligand>
        <name>NAD(+)</name>
        <dbReference type="ChEBI" id="CHEBI:57540"/>
    </ligand>
</feature>
<feature type="binding site" evidence="1">
    <location>
        <position position="136"/>
    </location>
    <ligand>
        <name>NAD(+)</name>
        <dbReference type="ChEBI" id="CHEBI:57540"/>
    </ligand>
</feature>
<feature type="binding site" evidence="1">
    <location>
        <position position="145"/>
    </location>
    <ligand>
        <name>NAD(+)</name>
        <dbReference type="ChEBI" id="CHEBI:57540"/>
    </ligand>
</feature>
<feature type="binding site" evidence="1">
    <location>
        <begin position="163"/>
        <end position="166"/>
    </location>
    <ligand>
        <name>NAD(+)</name>
        <dbReference type="ChEBI" id="CHEBI:57540"/>
    </ligand>
</feature>
<feature type="binding site" evidence="1">
    <location>
        <position position="178"/>
    </location>
    <ligand>
        <name>Zn(2+)</name>
        <dbReference type="ChEBI" id="CHEBI:29105"/>
    </ligand>
</feature>
<feature type="binding site" evidence="1">
    <location>
        <position position="242"/>
    </location>
    <ligand>
        <name>Zn(2+)</name>
        <dbReference type="ChEBI" id="CHEBI:29105"/>
    </ligand>
</feature>
<feature type="binding site" evidence="1">
    <location>
        <position position="256"/>
    </location>
    <ligand>
        <name>Zn(2+)</name>
        <dbReference type="ChEBI" id="CHEBI:29105"/>
    </ligand>
</feature>
<sequence length="354" mass="40316">MKLQTTYPSNNYPIYVEHGAIDHISTYIDQFDQSFILIDEHVNQYFADKFDDILSYENVHKVIIPAGEKTKTFEQYQETLEYILSHHVTRNTAIIAVGGGATGDFAGFIAATLLRGVHFIQVPTTILAHDSSVGGKVGINSKQGKNLIGAFYRPTAVIYDLDFLKTLPFEQILSGYAEVYKHALLNGESATQDIEQHFKDREILQSLNGMDKYIAKGIETKLDIVIADEKEQGVRKFLNLGHTFGHAVEYYHKIPHGHAVMVGIIYQFIVANALFDSKHDINHYIQYLIQLGYPLDMITDLDFETLYQYMLSDKKNDKQGVQMVLIRQFGDIVVQHVDQLTLQHACEQLKTYFK</sequence>
<reference key="1">
    <citation type="journal article" date="2006" name="Lancet">
        <title>Complete genome sequence of USA300, an epidemic clone of community-acquired meticillin-resistant Staphylococcus aureus.</title>
        <authorList>
            <person name="Diep B.A."/>
            <person name="Gill S.R."/>
            <person name="Chang R.F."/>
            <person name="Phan T.H."/>
            <person name="Chen J.H."/>
            <person name="Davidson M.G."/>
            <person name="Lin F."/>
            <person name="Lin J."/>
            <person name="Carleton H.A."/>
            <person name="Mongodin E.F."/>
            <person name="Sensabaugh G.F."/>
            <person name="Perdreau-Remington F."/>
        </authorList>
    </citation>
    <scope>NUCLEOTIDE SEQUENCE [LARGE SCALE GENOMIC DNA]</scope>
    <source>
        <strain>USA300</strain>
    </source>
</reference>